<reference key="1">
    <citation type="journal article" date="2006" name="BMC Genomics">
        <title>Complete genome sequence of Shigella flexneri 5b and comparison with Shigella flexneri 2a.</title>
        <authorList>
            <person name="Nie H."/>
            <person name="Yang F."/>
            <person name="Zhang X."/>
            <person name="Yang J."/>
            <person name="Chen L."/>
            <person name="Wang J."/>
            <person name="Xiong Z."/>
            <person name="Peng J."/>
            <person name="Sun L."/>
            <person name="Dong J."/>
            <person name="Xue Y."/>
            <person name="Xu X."/>
            <person name="Chen S."/>
            <person name="Yao Z."/>
            <person name="Shen Y."/>
            <person name="Jin Q."/>
        </authorList>
    </citation>
    <scope>NUCLEOTIDE SEQUENCE [LARGE SCALE GENOMIC DNA]</scope>
    <source>
        <strain>8401</strain>
    </source>
</reference>
<feature type="chain" id="PRO_1000002836" description="Crossover junction endodeoxyribonuclease RuvC">
    <location>
        <begin position="1"/>
        <end position="173"/>
    </location>
</feature>
<feature type="active site" evidence="1">
    <location>
        <position position="8"/>
    </location>
</feature>
<feature type="active site" evidence="1">
    <location>
        <position position="67"/>
    </location>
</feature>
<feature type="active site" evidence="1">
    <location>
        <position position="139"/>
    </location>
</feature>
<feature type="binding site" evidence="1">
    <location>
        <position position="8"/>
    </location>
    <ligand>
        <name>Mg(2+)</name>
        <dbReference type="ChEBI" id="CHEBI:18420"/>
        <label>1</label>
    </ligand>
</feature>
<feature type="binding site" evidence="1">
    <location>
        <position position="67"/>
    </location>
    <ligand>
        <name>Mg(2+)</name>
        <dbReference type="ChEBI" id="CHEBI:18420"/>
        <label>2</label>
    </ligand>
</feature>
<feature type="binding site" evidence="1">
    <location>
        <position position="139"/>
    </location>
    <ligand>
        <name>Mg(2+)</name>
        <dbReference type="ChEBI" id="CHEBI:18420"/>
        <label>1</label>
    </ligand>
</feature>
<name>RUVC_SHIF8</name>
<evidence type="ECO:0000255" key="1">
    <source>
        <dbReference type="HAMAP-Rule" id="MF_00034"/>
    </source>
</evidence>
<proteinExistence type="inferred from homology"/>
<accession>Q0T3U3</accession>
<dbReference type="EC" id="3.1.21.10" evidence="1"/>
<dbReference type="EMBL" id="CP000266">
    <property type="protein sequence ID" value="ABF04022.1"/>
    <property type="molecule type" value="Genomic_DNA"/>
</dbReference>
<dbReference type="RefSeq" id="WP_000974712.1">
    <property type="nucleotide sequence ID" value="NC_008258.1"/>
</dbReference>
<dbReference type="SMR" id="Q0T3U3"/>
<dbReference type="KEGG" id="sfv:SFV_1865"/>
<dbReference type="HOGENOM" id="CLU_091257_2_1_6"/>
<dbReference type="Proteomes" id="UP000000659">
    <property type="component" value="Chromosome"/>
</dbReference>
<dbReference type="GO" id="GO:0005737">
    <property type="term" value="C:cytoplasm"/>
    <property type="evidence" value="ECO:0007669"/>
    <property type="project" value="UniProtKB-SubCell"/>
</dbReference>
<dbReference type="GO" id="GO:0048476">
    <property type="term" value="C:Holliday junction resolvase complex"/>
    <property type="evidence" value="ECO:0007669"/>
    <property type="project" value="UniProtKB-UniRule"/>
</dbReference>
<dbReference type="GO" id="GO:0008821">
    <property type="term" value="F:crossover junction DNA endonuclease activity"/>
    <property type="evidence" value="ECO:0007669"/>
    <property type="project" value="UniProtKB-UniRule"/>
</dbReference>
<dbReference type="GO" id="GO:0003677">
    <property type="term" value="F:DNA binding"/>
    <property type="evidence" value="ECO:0007669"/>
    <property type="project" value="UniProtKB-KW"/>
</dbReference>
<dbReference type="GO" id="GO:0000287">
    <property type="term" value="F:magnesium ion binding"/>
    <property type="evidence" value="ECO:0007669"/>
    <property type="project" value="UniProtKB-UniRule"/>
</dbReference>
<dbReference type="GO" id="GO:0006310">
    <property type="term" value="P:DNA recombination"/>
    <property type="evidence" value="ECO:0007669"/>
    <property type="project" value="UniProtKB-UniRule"/>
</dbReference>
<dbReference type="GO" id="GO:0006281">
    <property type="term" value="P:DNA repair"/>
    <property type="evidence" value="ECO:0007669"/>
    <property type="project" value="UniProtKB-UniRule"/>
</dbReference>
<dbReference type="CDD" id="cd16962">
    <property type="entry name" value="RuvC"/>
    <property type="match status" value="1"/>
</dbReference>
<dbReference type="FunFam" id="3.30.420.10:FF:000002">
    <property type="entry name" value="Crossover junction endodeoxyribonuclease RuvC"/>
    <property type="match status" value="1"/>
</dbReference>
<dbReference type="Gene3D" id="3.30.420.10">
    <property type="entry name" value="Ribonuclease H-like superfamily/Ribonuclease H"/>
    <property type="match status" value="1"/>
</dbReference>
<dbReference type="HAMAP" id="MF_00034">
    <property type="entry name" value="RuvC"/>
    <property type="match status" value="1"/>
</dbReference>
<dbReference type="InterPro" id="IPR012337">
    <property type="entry name" value="RNaseH-like_sf"/>
</dbReference>
<dbReference type="InterPro" id="IPR036397">
    <property type="entry name" value="RNaseH_sf"/>
</dbReference>
<dbReference type="InterPro" id="IPR020563">
    <property type="entry name" value="X-over_junc_endoDNase_Mg_BS"/>
</dbReference>
<dbReference type="InterPro" id="IPR002176">
    <property type="entry name" value="X-over_junc_endoDNase_RuvC"/>
</dbReference>
<dbReference type="NCBIfam" id="NF000711">
    <property type="entry name" value="PRK00039.2-1"/>
    <property type="match status" value="1"/>
</dbReference>
<dbReference type="NCBIfam" id="TIGR00228">
    <property type="entry name" value="ruvC"/>
    <property type="match status" value="1"/>
</dbReference>
<dbReference type="PANTHER" id="PTHR30194">
    <property type="entry name" value="CROSSOVER JUNCTION ENDODEOXYRIBONUCLEASE RUVC"/>
    <property type="match status" value="1"/>
</dbReference>
<dbReference type="PANTHER" id="PTHR30194:SF3">
    <property type="entry name" value="CROSSOVER JUNCTION ENDODEOXYRIBONUCLEASE RUVC"/>
    <property type="match status" value="1"/>
</dbReference>
<dbReference type="Pfam" id="PF02075">
    <property type="entry name" value="RuvC"/>
    <property type="match status" value="1"/>
</dbReference>
<dbReference type="PRINTS" id="PR00696">
    <property type="entry name" value="RSOLVASERUVC"/>
</dbReference>
<dbReference type="SUPFAM" id="SSF53098">
    <property type="entry name" value="Ribonuclease H-like"/>
    <property type="match status" value="1"/>
</dbReference>
<dbReference type="PROSITE" id="PS01321">
    <property type="entry name" value="RUVC"/>
    <property type="match status" value="1"/>
</dbReference>
<comment type="function">
    <text evidence="1">The RuvA-RuvB-RuvC complex processes Holliday junction (HJ) DNA during genetic recombination and DNA repair. Endonuclease that resolves HJ intermediates. Cleaves cruciform DNA by making single-stranded nicks across the HJ at symmetrical positions within the homologous arms, yielding a 5'-phosphate and a 3'-hydroxyl group; requires a central core of homology in the junction. The consensus cleavage sequence is 5'-(A/T)TT(C/G)-3'. Cleavage occurs on the 3'-side of the TT dinucleotide at the point of strand exchange. HJ branch migration catalyzed by RuvA-RuvB allows RuvC to scan DNA until it finds its consensus sequence, where it cleaves and resolves the cruciform DNA.</text>
</comment>
<comment type="catalytic activity">
    <reaction evidence="1">
        <text>Endonucleolytic cleavage at a junction such as a reciprocal single-stranded crossover between two homologous DNA duplexes (Holliday junction).</text>
        <dbReference type="EC" id="3.1.21.10"/>
    </reaction>
</comment>
<comment type="cofactor">
    <cofactor evidence="1">
        <name>Mg(2+)</name>
        <dbReference type="ChEBI" id="CHEBI:18420"/>
    </cofactor>
    <text evidence="1">Binds 2 Mg(2+) ion per subunit.</text>
</comment>
<comment type="subunit">
    <text evidence="1">Homodimer which binds Holliday junction (HJ) DNA. The HJ becomes 2-fold symmetrical on binding to RuvC with unstacked arms; it has a different conformation from HJ DNA in complex with RuvA. In the full resolvosome a probable DNA-RuvA(4)-RuvB(12)-RuvC(2) complex forms which resolves the HJ.</text>
</comment>
<comment type="subcellular location">
    <subcellularLocation>
        <location evidence="1">Cytoplasm</location>
    </subcellularLocation>
</comment>
<comment type="similarity">
    <text evidence="1">Belongs to the RuvC family.</text>
</comment>
<sequence>MAIILGIDPGSRVTGYGVIRQVGRQLSYLGSGCIRTKVDDLPSRLKLIYAGVTEIITQFQPDYFAIEQVFMAKNADSALKLGQARGVAIVAAVNQELPVFEYAARQVKQTVVGMGSAEKSQVQHMVRTLLKLPANPQADAADALAIAITHCHVSQNAMQMSESRLNLTRGRLR</sequence>
<gene>
    <name evidence="1" type="primary">ruvC</name>
    <name type="ordered locus">SFV_1865</name>
</gene>
<protein>
    <recommendedName>
        <fullName evidence="1">Crossover junction endodeoxyribonuclease RuvC</fullName>
        <ecNumber evidence="1">3.1.21.10</ecNumber>
    </recommendedName>
    <alternativeName>
        <fullName evidence="1">Holliday junction nuclease RuvC</fullName>
    </alternativeName>
    <alternativeName>
        <fullName evidence="1">Holliday junction resolvase RuvC</fullName>
    </alternativeName>
</protein>
<organism>
    <name type="scientific">Shigella flexneri serotype 5b (strain 8401)</name>
    <dbReference type="NCBI Taxonomy" id="373384"/>
    <lineage>
        <taxon>Bacteria</taxon>
        <taxon>Pseudomonadati</taxon>
        <taxon>Pseudomonadota</taxon>
        <taxon>Gammaproteobacteria</taxon>
        <taxon>Enterobacterales</taxon>
        <taxon>Enterobacteriaceae</taxon>
        <taxon>Shigella</taxon>
    </lineage>
</organism>
<keyword id="KW-0963">Cytoplasm</keyword>
<keyword id="KW-0227">DNA damage</keyword>
<keyword id="KW-0233">DNA recombination</keyword>
<keyword id="KW-0234">DNA repair</keyword>
<keyword id="KW-0238">DNA-binding</keyword>
<keyword id="KW-0255">Endonuclease</keyword>
<keyword id="KW-0378">Hydrolase</keyword>
<keyword id="KW-0460">Magnesium</keyword>
<keyword id="KW-0479">Metal-binding</keyword>
<keyword id="KW-0540">Nuclease</keyword>